<dbReference type="EMBL" id="CP001638">
    <property type="protein sequence ID" value="ACS25411.1"/>
    <property type="molecule type" value="Genomic_DNA"/>
</dbReference>
<dbReference type="SMR" id="C5D695"/>
<dbReference type="STRING" id="471223.GWCH70_2720"/>
<dbReference type="KEGG" id="gwc:GWCH70_2720"/>
<dbReference type="eggNOG" id="COG4477">
    <property type="taxonomic scope" value="Bacteria"/>
</dbReference>
<dbReference type="HOGENOM" id="CLU_034079_1_0_9"/>
<dbReference type="OrthoDB" id="1654473at2"/>
<dbReference type="GO" id="GO:0005886">
    <property type="term" value="C:plasma membrane"/>
    <property type="evidence" value="ECO:0007669"/>
    <property type="project" value="UniProtKB-SubCell"/>
</dbReference>
<dbReference type="GO" id="GO:0005940">
    <property type="term" value="C:septin ring"/>
    <property type="evidence" value="ECO:0007669"/>
    <property type="project" value="InterPro"/>
</dbReference>
<dbReference type="GO" id="GO:0000917">
    <property type="term" value="P:division septum assembly"/>
    <property type="evidence" value="ECO:0007669"/>
    <property type="project" value="UniProtKB-KW"/>
</dbReference>
<dbReference type="GO" id="GO:0000921">
    <property type="term" value="P:septin ring assembly"/>
    <property type="evidence" value="ECO:0007669"/>
    <property type="project" value="InterPro"/>
</dbReference>
<dbReference type="HAMAP" id="MF_00728">
    <property type="entry name" value="EzrA"/>
    <property type="match status" value="1"/>
</dbReference>
<dbReference type="InterPro" id="IPR010379">
    <property type="entry name" value="EzrA"/>
</dbReference>
<dbReference type="NCBIfam" id="NF003413">
    <property type="entry name" value="PRK04778.1-7"/>
    <property type="match status" value="1"/>
</dbReference>
<dbReference type="Pfam" id="PF06160">
    <property type="entry name" value="EzrA"/>
    <property type="match status" value="1"/>
</dbReference>
<protein>
    <recommendedName>
        <fullName evidence="1">Septation ring formation regulator EzrA</fullName>
    </recommendedName>
</protein>
<proteinExistence type="inferred from homology"/>
<reference key="1">
    <citation type="submission" date="2009-06" db="EMBL/GenBank/DDBJ databases">
        <title>Complete sequence of chromosome of Geopacillus sp. WCH70.</title>
        <authorList>
            <consortium name="US DOE Joint Genome Institute"/>
            <person name="Lucas S."/>
            <person name="Copeland A."/>
            <person name="Lapidus A."/>
            <person name="Glavina del Rio T."/>
            <person name="Dalin E."/>
            <person name="Tice H."/>
            <person name="Bruce D."/>
            <person name="Goodwin L."/>
            <person name="Pitluck S."/>
            <person name="Chertkov O."/>
            <person name="Brettin T."/>
            <person name="Detter J.C."/>
            <person name="Han C."/>
            <person name="Larimer F."/>
            <person name="Land M."/>
            <person name="Hauser L."/>
            <person name="Kyrpides N."/>
            <person name="Mikhailova N."/>
            <person name="Brumm P."/>
            <person name="Mead D.A."/>
            <person name="Richardson P."/>
        </authorList>
    </citation>
    <scope>NUCLEOTIDE SEQUENCE [LARGE SCALE GENOMIC DNA]</scope>
    <source>
        <strain>WCH70</strain>
    </source>
</reference>
<sequence>MEIAVIVLLLLGGVMIYNHVYRKKMYSEIDRLEAWKISIMNRPVPDELSKVKQLNMTGETEQLFEKWRQKWDDLVAVKLPDVEEKLFDTEELLDKYRYAKAKAVLREIDQLLRQAEEEVQLIIDEVHELIGSEEQNRTEIEELRTMYREAKKTLLAYRYTFGVAAAKLDEKLEEIESKFKQFEELTASGNYLAAREIVLSSKGELNKVTEMMSDIPELLTECQTTIPAQLEELYDGYKEMKQEGYILDHLQIDREIVQKREKIEQCMQMIGDLQIEEAKQGITEIKEEIDTLYDLLEKEVISHHYIKTEMSRIEEMLNELNEEAKETSEETLFVQQSYRLSTKDLEKYRSIEKQIHQLMKRFEIIQARILEAKTAHSLLKEELEQLLAQIEMMKEEHEEFRKMLQTLRKDELVAREKLDEMKKKLSEAMRLVQKSRLPGLPKSYELQLSEAKDSLMKVAVRLEEKPLNMSAVHQALEESGNMVQRVYERTVEMIEQASLVEKVIQYGNRYRRRYPSVKEGLEEAEFLFRHYDYEQALEQAVAALEKVEPGALQRIQQIFRDERSKEE</sequence>
<feature type="chain" id="PRO_1000212729" description="Septation ring formation regulator EzrA">
    <location>
        <begin position="1"/>
        <end position="567"/>
    </location>
</feature>
<feature type="topological domain" description="Extracellular" evidence="1">
    <location>
        <begin position="1"/>
        <end position="2"/>
    </location>
</feature>
<feature type="transmembrane region" description="Helical" evidence="1">
    <location>
        <begin position="3"/>
        <end position="21"/>
    </location>
</feature>
<feature type="topological domain" description="Cytoplasmic" evidence="1">
    <location>
        <begin position="22"/>
        <end position="567"/>
    </location>
</feature>
<feature type="coiled-coil region" evidence="1">
    <location>
        <begin position="97"/>
        <end position="188"/>
    </location>
</feature>
<feature type="coiled-coil region" evidence="1">
    <location>
        <begin position="254"/>
        <end position="465"/>
    </location>
</feature>
<evidence type="ECO:0000255" key="1">
    <source>
        <dbReference type="HAMAP-Rule" id="MF_00728"/>
    </source>
</evidence>
<comment type="function">
    <text evidence="1">Negative regulator of FtsZ ring formation; modulates the frequency and position of FtsZ ring formation. Inhibits FtsZ ring formation at polar sites. Interacts either with FtsZ or with one of its binding partners to promote depolymerization.</text>
</comment>
<comment type="subcellular location">
    <subcellularLocation>
        <location evidence="1">Cell membrane</location>
        <topology evidence="1">Single-pass membrane protein</topology>
    </subcellularLocation>
    <text evidence="1">Colocalized with FtsZ to the nascent septal site.</text>
</comment>
<comment type="similarity">
    <text evidence="1">Belongs to the EzrA family.</text>
</comment>
<name>EZRA_GEOSW</name>
<gene>
    <name evidence="1" type="primary">ezrA</name>
    <name type="ordered locus">GWCH70_2720</name>
</gene>
<keyword id="KW-0131">Cell cycle</keyword>
<keyword id="KW-0132">Cell division</keyword>
<keyword id="KW-1003">Cell membrane</keyword>
<keyword id="KW-0175">Coiled coil</keyword>
<keyword id="KW-0472">Membrane</keyword>
<keyword id="KW-0717">Septation</keyword>
<keyword id="KW-0812">Transmembrane</keyword>
<keyword id="KW-1133">Transmembrane helix</keyword>
<accession>C5D695</accession>
<organism>
    <name type="scientific">Geobacillus sp. (strain WCH70)</name>
    <dbReference type="NCBI Taxonomy" id="471223"/>
    <lineage>
        <taxon>Bacteria</taxon>
        <taxon>Bacillati</taxon>
        <taxon>Bacillota</taxon>
        <taxon>Bacilli</taxon>
        <taxon>Bacillales</taxon>
        <taxon>Anoxybacillaceae</taxon>
        <taxon>Geobacillus</taxon>
    </lineage>
</organism>